<feature type="chain" id="PRO_0000276268" description="Protein PsbN">
    <location>
        <begin position="1"/>
        <end position="43"/>
    </location>
</feature>
<feature type="transmembrane region" description="Helical" evidence="1">
    <location>
        <begin position="5"/>
        <end position="27"/>
    </location>
</feature>
<comment type="function">
    <text evidence="1">May play a role in photosystem I and II biogenesis.</text>
</comment>
<comment type="subcellular location">
    <subcellularLocation>
        <location evidence="1">Plastid</location>
        <location evidence="1">Chloroplast thylakoid membrane</location>
        <topology evidence="1">Single-pass membrane protein</topology>
    </subcellularLocation>
</comment>
<comment type="similarity">
    <text evidence="1">Belongs to the PsbN family.</text>
</comment>
<comment type="caution">
    <text evidence="1">Originally thought to be a component of PSII; based on experiments in Synechocystis, N.tabacum and barley, and its absence from PSII in T.elongatus and T.vulcanus, this is probably not true.</text>
</comment>
<gene>
    <name evidence="1" type="primary">psbN</name>
</gene>
<protein>
    <recommendedName>
        <fullName evidence="1">Protein PsbN</fullName>
    </recommendedName>
</protein>
<name>PSBN_DRIGR</name>
<sequence>METATLVAISISGSLVSFTGYALYTAFGQPSQQLRDPFEEHGD</sequence>
<proteinExistence type="inferred from homology"/>
<geneLocation type="chloroplast"/>
<keyword id="KW-0150">Chloroplast</keyword>
<keyword id="KW-0472">Membrane</keyword>
<keyword id="KW-0934">Plastid</keyword>
<keyword id="KW-0793">Thylakoid</keyword>
<keyword id="KW-0812">Transmembrane</keyword>
<keyword id="KW-1133">Transmembrane helix</keyword>
<dbReference type="EMBL" id="DQ887676">
    <property type="protein sequence ID" value="ABH88324.1"/>
    <property type="molecule type" value="Genomic_DNA"/>
</dbReference>
<dbReference type="RefSeq" id="YP_784414.1">
    <property type="nucleotide sequence ID" value="NC_008456.1"/>
</dbReference>
<dbReference type="SMR" id="Q06GW9"/>
<dbReference type="GeneID" id="4363600"/>
<dbReference type="GO" id="GO:0009535">
    <property type="term" value="C:chloroplast thylakoid membrane"/>
    <property type="evidence" value="ECO:0007669"/>
    <property type="project" value="UniProtKB-SubCell"/>
</dbReference>
<dbReference type="GO" id="GO:0015979">
    <property type="term" value="P:photosynthesis"/>
    <property type="evidence" value="ECO:0007669"/>
    <property type="project" value="InterPro"/>
</dbReference>
<dbReference type="HAMAP" id="MF_00293">
    <property type="entry name" value="PSII_PsbN"/>
    <property type="match status" value="1"/>
</dbReference>
<dbReference type="InterPro" id="IPR003398">
    <property type="entry name" value="PSII_PsbN"/>
</dbReference>
<dbReference type="PANTHER" id="PTHR35326">
    <property type="entry name" value="PROTEIN PSBN"/>
    <property type="match status" value="1"/>
</dbReference>
<dbReference type="PANTHER" id="PTHR35326:SF3">
    <property type="entry name" value="PROTEIN PSBN"/>
    <property type="match status" value="1"/>
</dbReference>
<dbReference type="Pfam" id="PF02468">
    <property type="entry name" value="PsbN"/>
    <property type="match status" value="1"/>
</dbReference>
<accession>Q06GW9</accession>
<evidence type="ECO:0000255" key="1">
    <source>
        <dbReference type="HAMAP-Rule" id="MF_00293"/>
    </source>
</evidence>
<reference key="1">
    <citation type="journal article" date="2006" name="BMC Evol. Biol.">
        <title>Complete plastid genome sequences of Drimys, Liriodendron, and Piper: implications for the phylogenetic relationships of magnoliids.</title>
        <authorList>
            <person name="Cai Z."/>
            <person name="Penaflor C."/>
            <person name="Kuehl J.V."/>
            <person name="Leebens-Mack J."/>
            <person name="Carlson J.E."/>
            <person name="dePamphilis C.W."/>
            <person name="Boore J.L."/>
            <person name="Jansen R.K."/>
        </authorList>
    </citation>
    <scope>NUCLEOTIDE SEQUENCE [LARGE SCALE GENOMIC DNA]</scope>
</reference>
<organism>
    <name type="scientific">Drimys granadensis</name>
    <dbReference type="NCBI Taxonomy" id="224735"/>
    <lineage>
        <taxon>Eukaryota</taxon>
        <taxon>Viridiplantae</taxon>
        <taxon>Streptophyta</taxon>
        <taxon>Embryophyta</taxon>
        <taxon>Tracheophyta</taxon>
        <taxon>Spermatophyta</taxon>
        <taxon>Magnoliopsida</taxon>
        <taxon>Magnoliidae</taxon>
        <taxon>Canellales</taxon>
        <taxon>Winteraceae</taxon>
        <taxon>Drimys</taxon>
    </lineage>
</organism>